<feature type="chain" id="PRO_0000208749" description="Uncharacterized transporter BF1518">
    <location>
        <begin position="1"/>
        <end position="565"/>
    </location>
</feature>
<feature type="transmembrane region" description="Helical" evidence="1">
    <location>
        <begin position="14"/>
        <end position="34"/>
    </location>
</feature>
<feature type="transmembrane region" description="Helical" evidence="1">
    <location>
        <begin position="36"/>
        <end position="56"/>
    </location>
</feature>
<feature type="transmembrane region" description="Helical" evidence="1">
    <location>
        <begin position="92"/>
        <end position="112"/>
    </location>
</feature>
<feature type="transmembrane region" description="Helical" evidence="1">
    <location>
        <begin position="117"/>
        <end position="137"/>
    </location>
</feature>
<feature type="transmembrane region" description="Helical" evidence="1">
    <location>
        <begin position="157"/>
        <end position="177"/>
    </location>
</feature>
<feature type="transmembrane region" description="Helical" evidence="1">
    <location>
        <begin position="391"/>
        <end position="411"/>
    </location>
</feature>
<feature type="transmembrane region" description="Helical" evidence="1">
    <location>
        <begin position="414"/>
        <end position="434"/>
    </location>
</feature>
<feature type="transmembrane region" description="Helical" evidence="1">
    <location>
        <begin position="448"/>
        <end position="468"/>
    </location>
</feature>
<feature type="transmembrane region" description="Helical" evidence="1">
    <location>
        <begin position="481"/>
        <end position="501"/>
    </location>
</feature>
<feature type="transmembrane region" description="Helical" evidence="1">
    <location>
        <begin position="508"/>
        <end position="530"/>
    </location>
</feature>
<feature type="transmembrane region" description="Helical" evidence="1">
    <location>
        <begin position="545"/>
        <end position="565"/>
    </location>
</feature>
<feature type="domain" description="RCK C-terminal" evidence="2">
    <location>
        <begin position="296"/>
        <end position="381"/>
    </location>
</feature>
<protein>
    <recommendedName>
        <fullName>Uncharacterized transporter BF1518</fullName>
    </recommendedName>
</protein>
<gene>
    <name type="ordered locus">BF1518</name>
</gene>
<name>Y1518_BACFR</name>
<evidence type="ECO:0000255" key="1"/>
<evidence type="ECO:0000255" key="2">
    <source>
        <dbReference type="PROSITE-ProRule" id="PRU00544"/>
    </source>
</evidence>
<evidence type="ECO:0000305" key="3"/>
<sequence>MDWIVHQLRVHPELAIFLTLFVGFWIGKIKIGKFSLGVVTSVLLVGVLVGQLDITVDGPIKSVFFLLFLFAIGYKVGPQFFRGLKKDGLPQMGFAAIMCVFCLIIPWILAKIMGYNVGEAAGLLAGSQTISAVIGVAGDTINELNISPETKEAYNNIIPVSYAVTYIFGTAGSAWVLGSLGPRLLGGLDKVKAACKELEAKMGNNEADQPGFMAAARPVTFRAYKIANEWFGDGKRVSDLESYFQENDKRLFVERVRQAGVIVKEVSPTFVLKKGDEVVLSGRREYVIGEEDWIGPEVLDPQLLDFPAEVLPVMVTRKTVAGEKVSTIRALKFMHGVSIRRIKRAGIDIPVLAQTVVDAGDMVELVGTKHEVDAAAKQLGYADRPTNQTDMIFVGLGILIGGLIGALSIHMGGVPISLSTSGGALIGGLFFGWLRSKHPTFGRIPEPALWILDNVGLNMFIAVVGIAAGPSFVQGFKEVGLSLFIVGALATSIPLIAGILMAKYIFKFHPALVLGCTAGARTTTAALGAIQEAVESETPALGYTVTYAVGNTLLIIWGVVIVLLM</sequence>
<reference key="1">
    <citation type="journal article" date="2004" name="Proc. Natl. Acad. Sci. U.S.A.">
        <title>Genomic analysis of Bacteroides fragilis reveals extensive DNA inversions regulating cell surface adaptation.</title>
        <authorList>
            <person name="Kuwahara T."/>
            <person name="Yamashita A."/>
            <person name="Hirakawa H."/>
            <person name="Nakayama H."/>
            <person name="Toh H."/>
            <person name="Okada N."/>
            <person name="Kuhara S."/>
            <person name="Hattori M."/>
            <person name="Hayashi T."/>
            <person name="Ohnishi Y."/>
        </authorList>
    </citation>
    <scope>NUCLEOTIDE SEQUENCE [LARGE SCALE GENOMIC DNA]</scope>
    <source>
        <strain>YCH46</strain>
    </source>
</reference>
<proteinExistence type="inferred from homology"/>
<accession>P0CJ82</accession>
<accession>Q64W57</accession>
<accession>Q93CN3</accession>
<dbReference type="EMBL" id="AP006841">
    <property type="protein sequence ID" value="BAD48269.1"/>
    <property type="molecule type" value="Genomic_DNA"/>
</dbReference>
<dbReference type="RefSeq" id="YP_098803.1">
    <property type="nucleotide sequence ID" value="NC_006347.1"/>
</dbReference>
<dbReference type="SMR" id="P0CJ82"/>
<dbReference type="STRING" id="295405.BF1518"/>
<dbReference type="KEGG" id="bfr:BF1518"/>
<dbReference type="PATRIC" id="fig|295405.11.peg.1482"/>
<dbReference type="HOGENOM" id="CLU_035023_2_2_10"/>
<dbReference type="OrthoDB" id="9155749at2"/>
<dbReference type="Proteomes" id="UP000002197">
    <property type="component" value="Chromosome"/>
</dbReference>
<dbReference type="GO" id="GO:0005886">
    <property type="term" value="C:plasma membrane"/>
    <property type="evidence" value="ECO:0007669"/>
    <property type="project" value="UniProtKB-SubCell"/>
</dbReference>
<dbReference type="GO" id="GO:0008324">
    <property type="term" value="F:monoatomic cation transmembrane transporter activity"/>
    <property type="evidence" value="ECO:0007669"/>
    <property type="project" value="InterPro"/>
</dbReference>
<dbReference type="GO" id="GO:0006813">
    <property type="term" value="P:potassium ion transport"/>
    <property type="evidence" value="ECO:0007669"/>
    <property type="project" value="InterPro"/>
</dbReference>
<dbReference type="InterPro" id="IPR050144">
    <property type="entry name" value="AAE_transporter"/>
</dbReference>
<dbReference type="InterPro" id="IPR022457">
    <property type="entry name" value="Asp_Ala_antiprt"/>
</dbReference>
<dbReference type="InterPro" id="IPR006037">
    <property type="entry name" value="RCK_C"/>
</dbReference>
<dbReference type="InterPro" id="IPR036721">
    <property type="entry name" value="RCK_C_sf"/>
</dbReference>
<dbReference type="InterPro" id="IPR006512">
    <property type="entry name" value="YidE_YbjL"/>
</dbReference>
<dbReference type="NCBIfam" id="TIGR03802">
    <property type="entry name" value="Asp_Ala_antiprt"/>
    <property type="match status" value="1"/>
</dbReference>
<dbReference type="NCBIfam" id="TIGR01625">
    <property type="entry name" value="YidE_YbjL_dupl"/>
    <property type="match status" value="2"/>
</dbReference>
<dbReference type="PANTHER" id="PTHR30445:SF9">
    <property type="match status" value="1"/>
</dbReference>
<dbReference type="PANTHER" id="PTHR30445">
    <property type="entry name" value="K(+)_H(+) ANTIPORTER SUBUNIT KHTT"/>
    <property type="match status" value="1"/>
</dbReference>
<dbReference type="Pfam" id="PF06826">
    <property type="entry name" value="Asp-Al_Ex"/>
    <property type="match status" value="2"/>
</dbReference>
<dbReference type="SUPFAM" id="SSF116726">
    <property type="entry name" value="TrkA C-terminal domain-like"/>
    <property type="match status" value="1"/>
</dbReference>
<dbReference type="PROSITE" id="PS51202">
    <property type="entry name" value="RCK_C"/>
    <property type="match status" value="1"/>
</dbReference>
<comment type="subcellular location">
    <subcellularLocation>
        <location evidence="3">Cell membrane</location>
        <topology evidence="3">Multi-pass membrane protein</topology>
    </subcellularLocation>
</comment>
<comment type="similarity">
    <text evidence="3">Belongs to the AAE transporter (TC 2.A.81) family.</text>
</comment>
<keyword id="KW-1003">Cell membrane</keyword>
<keyword id="KW-0472">Membrane</keyword>
<keyword id="KW-0812">Transmembrane</keyword>
<keyword id="KW-1133">Transmembrane helix</keyword>
<keyword id="KW-0813">Transport</keyword>
<organism>
    <name type="scientific">Bacteroides fragilis (strain YCH46)</name>
    <dbReference type="NCBI Taxonomy" id="295405"/>
    <lineage>
        <taxon>Bacteria</taxon>
        <taxon>Pseudomonadati</taxon>
        <taxon>Bacteroidota</taxon>
        <taxon>Bacteroidia</taxon>
        <taxon>Bacteroidales</taxon>
        <taxon>Bacteroidaceae</taxon>
        <taxon>Bacteroides</taxon>
    </lineage>
</organism>